<proteinExistence type="inferred from homology"/>
<reference key="1">
    <citation type="journal article" date="2006" name="PLoS Genet.">
        <title>Secrets of soil survival revealed by the genome sequence of Arthrobacter aurescens TC1.</title>
        <authorList>
            <person name="Mongodin E.F."/>
            <person name="Shapir N."/>
            <person name="Daugherty S.C."/>
            <person name="DeBoy R.T."/>
            <person name="Emerson J.B."/>
            <person name="Shvartzbeyn A."/>
            <person name="Radune D."/>
            <person name="Vamathevan J."/>
            <person name="Riggs F."/>
            <person name="Grinberg V."/>
            <person name="Khouri H.M."/>
            <person name="Wackett L.P."/>
            <person name="Nelson K.E."/>
            <person name="Sadowsky M.J."/>
        </authorList>
    </citation>
    <scope>NUCLEOTIDE SEQUENCE [LARGE SCALE GENOMIC DNA]</scope>
    <source>
        <strain>TC1</strain>
    </source>
</reference>
<protein>
    <recommendedName>
        <fullName evidence="1">Chorismate synthase</fullName>
        <shortName evidence="1">CS</shortName>
        <ecNumber evidence="1">4.2.3.5</ecNumber>
    </recommendedName>
    <alternativeName>
        <fullName evidence="1">5-enolpyruvylshikimate-3-phosphate phospholyase</fullName>
    </alternativeName>
</protein>
<keyword id="KW-0028">Amino-acid biosynthesis</keyword>
<keyword id="KW-0057">Aromatic amino acid biosynthesis</keyword>
<keyword id="KW-0274">FAD</keyword>
<keyword id="KW-0285">Flavoprotein</keyword>
<keyword id="KW-0288">FMN</keyword>
<keyword id="KW-0456">Lyase</keyword>
<keyword id="KW-0521">NADP</keyword>
<accession>A1R705</accession>
<evidence type="ECO:0000255" key="1">
    <source>
        <dbReference type="HAMAP-Rule" id="MF_00300"/>
    </source>
</evidence>
<evidence type="ECO:0000305" key="2"/>
<comment type="function">
    <text evidence="1">Catalyzes the anti-1,4-elimination of the C-3 phosphate and the C-6 proR hydrogen from 5-enolpyruvylshikimate-3-phosphate (EPSP) to yield chorismate, which is the branch point compound that serves as the starting substrate for the three terminal pathways of aromatic amino acid biosynthesis. This reaction introduces a second double bond into the aromatic ring system.</text>
</comment>
<comment type="catalytic activity">
    <reaction evidence="1">
        <text>5-O-(1-carboxyvinyl)-3-phosphoshikimate = chorismate + phosphate</text>
        <dbReference type="Rhea" id="RHEA:21020"/>
        <dbReference type="ChEBI" id="CHEBI:29748"/>
        <dbReference type="ChEBI" id="CHEBI:43474"/>
        <dbReference type="ChEBI" id="CHEBI:57701"/>
        <dbReference type="EC" id="4.2.3.5"/>
    </reaction>
</comment>
<comment type="cofactor">
    <cofactor evidence="1">
        <name>FMNH2</name>
        <dbReference type="ChEBI" id="CHEBI:57618"/>
    </cofactor>
    <text evidence="1">Reduced FMN (FMNH(2)).</text>
</comment>
<comment type="pathway">
    <text evidence="1">Metabolic intermediate biosynthesis; chorismate biosynthesis; chorismate from D-erythrose 4-phosphate and phosphoenolpyruvate: step 7/7.</text>
</comment>
<comment type="subunit">
    <text evidence="1">Homotetramer.</text>
</comment>
<comment type="similarity">
    <text evidence="1">Belongs to the chorismate synthase family.</text>
</comment>
<comment type="sequence caution" evidence="2">
    <conflict type="erroneous initiation">
        <sequence resource="EMBL-CDS" id="ABM09327"/>
    </conflict>
    <text>Extended N-terminus.</text>
</comment>
<dbReference type="EC" id="4.2.3.5" evidence="1"/>
<dbReference type="EMBL" id="CP000474">
    <property type="protein sequence ID" value="ABM09327.1"/>
    <property type="status" value="ALT_INIT"/>
    <property type="molecule type" value="Genomic_DNA"/>
</dbReference>
<dbReference type="RefSeq" id="WP_014921976.1">
    <property type="nucleotide sequence ID" value="NC_008711.1"/>
</dbReference>
<dbReference type="SMR" id="A1R705"/>
<dbReference type="STRING" id="290340.AAur_2277"/>
<dbReference type="KEGG" id="aau:AAur_2277"/>
<dbReference type="eggNOG" id="COG0082">
    <property type="taxonomic scope" value="Bacteria"/>
</dbReference>
<dbReference type="HOGENOM" id="CLU_034547_2_0_11"/>
<dbReference type="OrthoDB" id="9771806at2"/>
<dbReference type="UniPathway" id="UPA00053">
    <property type="reaction ID" value="UER00090"/>
</dbReference>
<dbReference type="Proteomes" id="UP000000637">
    <property type="component" value="Chromosome"/>
</dbReference>
<dbReference type="GO" id="GO:0005829">
    <property type="term" value="C:cytosol"/>
    <property type="evidence" value="ECO:0007669"/>
    <property type="project" value="TreeGrafter"/>
</dbReference>
<dbReference type="GO" id="GO:0004107">
    <property type="term" value="F:chorismate synthase activity"/>
    <property type="evidence" value="ECO:0007669"/>
    <property type="project" value="UniProtKB-UniRule"/>
</dbReference>
<dbReference type="GO" id="GO:0010181">
    <property type="term" value="F:FMN binding"/>
    <property type="evidence" value="ECO:0007669"/>
    <property type="project" value="TreeGrafter"/>
</dbReference>
<dbReference type="GO" id="GO:0008652">
    <property type="term" value="P:amino acid biosynthetic process"/>
    <property type="evidence" value="ECO:0007669"/>
    <property type="project" value="UniProtKB-KW"/>
</dbReference>
<dbReference type="GO" id="GO:0009073">
    <property type="term" value="P:aromatic amino acid family biosynthetic process"/>
    <property type="evidence" value="ECO:0007669"/>
    <property type="project" value="UniProtKB-KW"/>
</dbReference>
<dbReference type="GO" id="GO:0009423">
    <property type="term" value="P:chorismate biosynthetic process"/>
    <property type="evidence" value="ECO:0007669"/>
    <property type="project" value="UniProtKB-UniRule"/>
</dbReference>
<dbReference type="CDD" id="cd07304">
    <property type="entry name" value="Chorismate_synthase"/>
    <property type="match status" value="1"/>
</dbReference>
<dbReference type="FunFam" id="3.60.150.10:FF:000002">
    <property type="entry name" value="Chorismate synthase"/>
    <property type="match status" value="1"/>
</dbReference>
<dbReference type="Gene3D" id="3.60.150.10">
    <property type="entry name" value="Chorismate synthase AroC"/>
    <property type="match status" value="1"/>
</dbReference>
<dbReference type="HAMAP" id="MF_00300">
    <property type="entry name" value="Chorismate_synth"/>
    <property type="match status" value="1"/>
</dbReference>
<dbReference type="InterPro" id="IPR000453">
    <property type="entry name" value="Chorismate_synth"/>
</dbReference>
<dbReference type="InterPro" id="IPR035904">
    <property type="entry name" value="Chorismate_synth_AroC_sf"/>
</dbReference>
<dbReference type="InterPro" id="IPR020541">
    <property type="entry name" value="Chorismate_synthase_CS"/>
</dbReference>
<dbReference type="NCBIfam" id="TIGR00033">
    <property type="entry name" value="aroC"/>
    <property type="match status" value="1"/>
</dbReference>
<dbReference type="NCBIfam" id="NF003793">
    <property type="entry name" value="PRK05382.1"/>
    <property type="match status" value="1"/>
</dbReference>
<dbReference type="PANTHER" id="PTHR21085">
    <property type="entry name" value="CHORISMATE SYNTHASE"/>
    <property type="match status" value="1"/>
</dbReference>
<dbReference type="PANTHER" id="PTHR21085:SF0">
    <property type="entry name" value="CHORISMATE SYNTHASE"/>
    <property type="match status" value="1"/>
</dbReference>
<dbReference type="Pfam" id="PF01264">
    <property type="entry name" value="Chorismate_synt"/>
    <property type="match status" value="1"/>
</dbReference>
<dbReference type="PIRSF" id="PIRSF001456">
    <property type="entry name" value="Chorismate_synth"/>
    <property type="match status" value="1"/>
</dbReference>
<dbReference type="SUPFAM" id="SSF103263">
    <property type="entry name" value="Chorismate synthase, AroC"/>
    <property type="match status" value="1"/>
</dbReference>
<dbReference type="PROSITE" id="PS00787">
    <property type="entry name" value="CHORISMATE_SYNTHASE_1"/>
    <property type="match status" value="1"/>
</dbReference>
<dbReference type="PROSITE" id="PS00788">
    <property type="entry name" value="CHORISMATE_SYNTHASE_2"/>
    <property type="match status" value="1"/>
</dbReference>
<dbReference type="PROSITE" id="PS00789">
    <property type="entry name" value="CHORISMATE_SYNTHASE_3"/>
    <property type="match status" value="1"/>
</dbReference>
<name>AROC_PAEAT</name>
<feature type="chain" id="PRO_0000322386" description="Chorismate synthase">
    <location>
        <begin position="1"/>
        <end position="399"/>
    </location>
</feature>
<feature type="binding site" evidence="1">
    <location>
        <position position="40"/>
    </location>
    <ligand>
        <name>NADP(+)</name>
        <dbReference type="ChEBI" id="CHEBI:58349"/>
    </ligand>
</feature>
<feature type="binding site" evidence="1">
    <location>
        <position position="46"/>
    </location>
    <ligand>
        <name>NADP(+)</name>
        <dbReference type="ChEBI" id="CHEBI:58349"/>
    </ligand>
</feature>
<feature type="binding site" evidence="1">
    <location>
        <begin position="135"/>
        <end position="137"/>
    </location>
    <ligand>
        <name>FMN</name>
        <dbReference type="ChEBI" id="CHEBI:58210"/>
    </ligand>
</feature>
<feature type="binding site" evidence="1">
    <location>
        <begin position="256"/>
        <end position="257"/>
    </location>
    <ligand>
        <name>FMN</name>
        <dbReference type="ChEBI" id="CHEBI:58210"/>
    </ligand>
</feature>
<feature type="binding site" evidence="1">
    <location>
        <position position="301"/>
    </location>
    <ligand>
        <name>FMN</name>
        <dbReference type="ChEBI" id="CHEBI:58210"/>
    </ligand>
</feature>
<feature type="binding site" evidence="1">
    <location>
        <begin position="316"/>
        <end position="320"/>
    </location>
    <ligand>
        <name>FMN</name>
        <dbReference type="ChEBI" id="CHEBI:58210"/>
    </ligand>
</feature>
<feature type="binding site" evidence="1">
    <location>
        <position position="342"/>
    </location>
    <ligand>
        <name>FMN</name>
        <dbReference type="ChEBI" id="CHEBI:58210"/>
    </ligand>
</feature>
<sequence length="399" mass="42361">MLRWLTAGESHGPALIGIVEGVPAGVELTSGQIRDALARRRLGYGRGARMKFEQDEVTIMGGVRHGLTQGGPVAIQVGNTEWPKWEQIMSADPVDPEVLADQARNAPLTRPRPGHADFTGMQKYGFDEARPVLERASARETATRVALGTVAAQFLKQLGIELVSHTVSIASVTVPEGRPLPLPKDVIALDADPLRCFDRETSNAMVAEVDAAHKEGETLGGVVEVLAYGLPPGLGSYVHWDRRLDSRLAAALMGIQAIKGVEVGDGFLTAARRGSAAHDEILKDENGKIVRQTNRAGGIEGGMSIGEVLRVRAAMKPIATVPRALRTIDVSTGEPAKAHHQRSDVCAVPAAGVVAEAMVALVLAEAVAEKFGGDSVPETQRNLQSYLESIPATLDSVGR</sequence>
<organism>
    <name type="scientific">Paenarthrobacter aurescens (strain TC1)</name>
    <dbReference type="NCBI Taxonomy" id="290340"/>
    <lineage>
        <taxon>Bacteria</taxon>
        <taxon>Bacillati</taxon>
        <taxon>Actinomycetota</taxon>
        <taxon>Actinomycetes</taxon>
        <taxon>Micrococcales</taxon>
        <taxon>Micrococcaceae</taxon>
        <taxon>Paenarthrobacter</taxon>
    </lineage>
</organism>
<gene>
    <name evidence="1" type="primary">aroC</name>
    <name type="ordered locus">AAur_2277</name>
</gene>